<proteinExistence type="inferred from homology"/>
<name>KPB2_TAKRU</name>
<gene>
    <name type="primary">phka2</name>
</gene>
<protein>
    <recommendedName>
        <fullName>Phosphorylase b kinase regulatory subunit alpha, liver isoform</fullName>
        <shortName>Phosphorylase kinase alpha L subunit</shortName>
    </recommendedName>
</protein>
<feature type="chain" id="PRO_0000057733" description="Phosphorylase b kinase regulatory subunit alpha, liver isoform">
    <location>
        <begin position="1"/>
        <end position="1229"/>
    </location>
</feature>
<feature type="region of interest" description="Disordered" evidence="4">
    <location>
        <begin position="625"/>
        <end position="648"/>
    </location>
</feature>
<feature type="region of interest" description="Calmodulin-binding" evidence="3">
    <location>
        <begin position="825"/>
        <end position="855"/>
    </location>
</feature>
<feature type="region of interest" description="Disordered" evidence="4">
    <location>
        <begin position="1024"/>
        <end position="1050"/>
    </location>
</feature>
<feature type="region of interest" description="Calmodulin-binding" evidence="3">
    <location>
        <begin position="1052"/>
        <end position="1092"/>
    </location>
</feature>
<feature type="compositionally biased region" description="Acidic residues" evidence="4">
    <location>
        <begin position="625"/>
        <end position="646"/>
    </location>
</feature>
<feature type="compositionally biased region" description="Polar residues" evidence="4">
    <location>
        <begin position="1028"/>
        <end position="1037"/>
    </location>
</feature>
<feature type="lipid moiety-binding region" description="S-farnesyl cysteine" evidence="2">
    <location>
        <position position="1226"/>
    </location>
</feature>
<organism>
    <name type="scientific">Takifugu rubripes</name>
    <name type="common">Japanese pufferfish</name>
    <name type="synonym">Fugu rubripes</name>
    <dbReference type="NCBI Taxonomy" id="31033"/>
    <lineage>
        <taxon>Eukaryota</taxon>
        <taxon>Metazoa</taxon>
        <taxon>Chordata</taxon>
        <taxon>Craniata</taxon>
        <taxon>Vertebrata</taxon>
        <taxon>Euteleostomi</taxon>
        <taxon>Actinopterygii</taxon>
        <taxon>Neopterygii</taxon>
        <taxon>Teleostei</taxon>
        <taxon>Neoteleostei</taxon>
        <taxon>Acanthomorphata</taxon>
        <taxon>Eupercaria</taxon>
        <taxon>Tetraodontiformes</taxon>
        <taxon>Tetradontoidea</taxon>
        <taxon>Tetraodontidae</taxon>
        <taxon>Takifugu</taxon>
    </lineage>
</organism>
<accession>Q9W6R1</accession>
<evidence type="ECO:0000250" key="1"/>
<evidence type="ECO:0000250" key="2">
    <source>
        <dbReference type="UniProtKB" id="P18688"/>
    </source>
</evidence>
<evidence type="ECO:0000255" key="3"/>
<evidence type="ECO:0000256" key="4">
    <source>
        <dbReference type="SAM" id="MobiDB-lite"/>
    </source>
</evidence>
<evidence type="ECO:0000305" key="5"/>
<dbReference type="EMBL" id="AF146687">
    <property type="protein sequence ID" value="AAD28794.1"/>
    <property type="molecule type" value="Genomic_DNA"/>
</dbReference>
<dbReference type="SMR" id="Q9W6R1"/>
<dbReference type="STRING" id="31033.ENSTRUP00000043732"/>
<dbReference type="eggNOG" id="KOG3635">
    <property type="taxonomic scope" value="Eukaryota"/>
</dbReference>
<dbReference type="InParanoid" id="Q9W6R1"/>
<dbReference type="BRENDA" id="2.7.11.19">
    <property type="organism ID" value="6209"/>
</dbReference>
<dbReference type="UniPathway" id="UPA00163"/>
<dbReference type="Proteomes" id="UP000005226">
    <property type="component" value="Unplaced"/>
</dbReference>
<dbReference type="GO" id="GO:0005964">
    <property type="term" value="C:phosphorylase kinase complex"/>
    <property type="evidence" value="ECO:0007669"/>
    <property type="project" value="TreeGrafter"/>
</dbReference>
<dbReference type="GO" id="GO:0005886">
    <property type="term" value="C:plasma membrane"/>
    <property type="evidence" value="ECO:0007669"/>
    <property type="project" value="UniProtKB-SubCell"/>
</dbReference>
<dbReference type="GO" id="GO:0005516">
    <property type="term" value="F:calmodulin binding"/>
    <property type="evidence" value="ECO:0007669"/>
    <property type="project" value="UniProtKB-KW"/>
</dbReference>
<dbReference type="GO" id="GO:0005977">
    <property type="term" value="P:glycogen metabolic process"/>
    <property type="evidence" value="ECO:0007669"/>
    <property type="project" value="UniProtKB-UniPathway"/>
</dbReference>
<dbReference type="FunFam" id="1.50.10.10:FF:000004">
    <property type="entry name" value="Phosphorylase b kinase regulatory subunit"/>
    <property type="match status" value="1"/>
</dbReference>
<dbReference type="Gene3D" id="1.50.10.10">
    <property type="match status" value="1"/>
</dbReference>
<dbReference type="InterPro" id="IPR008928">
    <property type="entry name" value="6-hairpin_glycosidase_sf"/>
</dbReference>
<dbReference type="InterPro" id="IPR012341">
    <property type="entry name" value="6hp_glycosidase-like_sf"/>
</dbReference>
<dbReference type="InterPro" id="IPR011613">
    <property type="entry name" value="GH15-like"/>
</dbReference>
<dbReference type="InterPro" id="IPR045583">
    <property type="entry name" value="KPBA/B_C"/>
</dbReference>
<dbReference type="InterPro" id="IPR008734">
    <property type="entry name" value="PHK_A/B_su"/>
</dbReference>
<dbReference type="PANTHER" id="PTHR10749">
    <property type="entry name" value="PHOSPHORYLASE B KINASE REGULATORY SUBUNIT"/>
    <property type="match status" value="1"/>
</dbReference>
<dbReference type="PANTHER" id="PTHR10749:SF5">
    <property type="entry name" value="PHOSPHORYLASE B KINASE REGULATORY SUBUNIT ALPHA, LIVER ISOFORM"/>
    <property type="match status" value="1"/>
</dbReference>
<dbReference type="Pfam" id="PF00723">
    <property type="entry name" value="Glyco_hydro_15"/>
    <property type="match status" value="1"/>
</dbReference>
<dbReference type="Pfam" id="PF19292">
    <property type="entry name" value="KPBB_C"/>
    <property type="match status" value="1"/>
</dbReference>
<dbReference type="SUPFAM" id="SSF48208">
    <property type="entry name" value="Six-hairpin glycosidases"/>
    <property type="match status" value="1"/>
</dbReference>
<keyword id="KW-0112">Calmodulin-binding</keyword>
<keyword id="KW-0119">Carbohydrate metabolism</keyword>
<keyword id="KW-1003">Cell membrane</keyword>
<keyword id="KW-0321">Glycogen metabolism</keyword>
<keyword id="KW-0449">Lipoprotein</keyword>
<keyword id="KW-0472">Membrane</keyword>
<keyword id="KW-0597">Phosphoprotein</keyword>
<keyword id="KW-0636">Prenylation</keyword>
<keyword id="KW-1185">Reference proteome</keyword>
<comment type="function">
    <text evidence="1">Phosphorylase b kinase catalyzes the phosphorylation of serine in certain substrates, including troponin I. The alpha chain may bind calmodulin (By similarity).</text>
</comment>
<comment type="activity regulation">
    <text evidence="1">By phosphorylation of various serine residues and by calcium.</text>
</comment>
<comment type="pathway">
    <text>Glycan biosynthesis; glycogen metabolism.</text>
</comment>
<comment type="subunit">
    <text evidence="1">Polymer of 16 chains, four each of alpha, beta, gamma, and delta. Alpha and beta are regulatory chains, gamma is the catalytic chain, and delta is calmodulin (By similarity).</text>
</comment>
<comment type="subcellular location">
    <subcellularLocation>
        <location evidence="5">Cell membrane</location>
        <topology evidence="5">Lipid-anchor</topology>
        <orientation evidence="5">Cytoplasmic side</orientation>
    </subcellularLocation>
</comment>
<comment type="PTM">
    <text evidence="2">Although the final Cys may be farnesylated, the terminal tripeptide is probably not removed, and the C-terminus is not methylated.</text>
</comment>
<comment type="similarity">
    <text evidence="5">Belongs to the phosphorylase b kinase regulatory chain family.</text>
</comment>
<reference key="1">
    <citation type="journal article" date="1999" name="Genome Res.">
        <title>Genomic structure and comparative analysis of nine Fugu genes: conservation of synteny with human chromosome Xp22.2-p22.1.</title>
        <authorList>
            <person name="Brunner B."/>
            <person name="Todt T."/>
            <person name="Lenzner S."/>
            <person name="Stout K."/>
            <person name="Schulz U."/>
            <person name="Ropers H.-H."/>
            <person name="Kalscheuer V.M."/>
        </authorList>
    </citation>
    <scope>NUCLEOTIDE SEQUENCE [GENOMIC DNA]</scope>
</reference>
<sequence length="1229" mass="137924">MRSRSNSGVRLDGYARLVHETILGFQNPVTGLLPASVQKKDAWVRDNVYSILAVWGLGMAYRKNADRDEDKAKAYELEQSVVKLMQGLLHCMMRQVAKVEKFKHTQSTTDCLHAKYDTSTCATVVGDDQWGHLQVDATSIYLLMLAQMTASGLRIISNLDEVAFVQNLVFYIEAAYKVADYGMWERGDKTNQGLPELNGSSVGMAKAALEAIDELDLFGAHGGPKSVIHVLPDEVEHCQSILCSMLPRASPSKEIDAGLLSVISFPAFAVEDADLVTITKSEIINKLQGRYGCCRFIRDGYHCPKEDPTRLHYDPAELKLFENIECEWPVFWTYLILDGIFAEDQVQVQEYREALEGVLIRGKNGIKLLPELYTVPFDKVEEEYRNPHSVDREATGQLPHMWEQSLYILGCLLAEGFLAPGEIDPLNRRFSTSFKPDVVVQVCVLAESQEIKALLSEQGMVVQTVAEVLPIRVMSARVLSQIYVRLGNCKKLSLSGRPYRHIGVLGTSKFYEIRNHTYTFTPQFLDQHHFYLALDNQMIVEMLRTELAYLSSCWRMTGRPTLTFPVTRSMLVEDGDAVDPCILSTLRKLQDGYFAGARVQMSDLSTFQTTSFHTRLSFLDEEHDDSLLEDDEEQEEEEEDKFEDDYNNYGPSGNNQVCYVSKDKFDQYLTQLLHSTTQKCHLPPIQRGQHHVFSAEHTTRDILSFMAQVQGLNVPKSSMYLPVTPLKSKHRRSLNLLDVPHPQHGPHLKQNKVGTFNSVLAADLHLPRDPQGKTDFATLVKQLKECPTLQDQADILYILNTSKGADWLVELSGPGQGGVSVHTLLEELYIQAGACKEWGLIRYISGILRKRVEVLAEACTDLISHHKQLTVGLPPEPRERVITVPLPPEELNTLIYEASGQDISVAVLTQEIMVYLAMYIRSQPALFGDMLRLRIGLIMQVMATELARSLHCSGEEASESLMSLSPFDMKNLLHHILSGKEFGVERSMRPIQSTATSPAISIHEIGHTGATKTERTGIRKLKSEIKQRCSSPSTPSGILSPVGPGPADGQLHWVERQGQWLRRRRLDGAINRVPVGFYQKVWKILQKCHGLSIDGYVLPSSTTREMTAGEIKFAVQVESVLNHVPQPEYRQLLVESVMVLGLVADVDVESIGSIIYVDRILHLANDLFLTDQKSYSAGDYFLEKDPETGICNFFYDSAPSGIYGTMTYLSKAAVTYIQDFLPSSSCIMQ</sequence>